<feature type="chain" id="PRO_1000193597" description="Gamma-glutamyl phosphate reductase">
    <location>
        <begin position="1"/>
        <end position="423"/>
    </location>
</feature>
<name>PROA_DESDA</name>
<accession>B8J495</accession>
<dbReference type="EC" id="1.2.1.41" evidence="1"/>
<dbReference type="EMBL" id="CP001358">
    <property type="protein sequence ID" value="ACL48353.1"/>
    <property type="molecule type" value="Genomic_DNA"/>
</dbReference>
<dbReference type="SMR" id="B8J495"/>
<dbReference type="STRING" id="525146.Ddes_0441"/>
<dbReference type="KEGG" id="dds:Ddes_0441"/>
<dbReference type="eggNOG" id="COG0014">
    <property type="taxonomic scope" value="Bacteria"/>
</dbReference>
<dbReference type="HOGENOM" id="CLU_030231_0_0_7"/>
<dbReference type="UniPathway" id="UPA00098">
    <property type="reaction ID" value="UER00360"/>
</dbReference>
<dbReference type="GO" id="GO:0005737">
    <property type="term" value="C:cytoplasm"/>
    <property type="evidence" value="ECO:0007669"/>
    <property type="project" value="UniProtKB-SubCell"/>
</dbReference>
<dbReference type="GO" id="GO:0004350">
    <property type="term" value="F:glutamate-5-semialdehyde dehydrogenase activity"/>
    <property type="evidence" value="ECO:0007669"/>
    <property type="project" value="UniProtKB-UniRule"/>
</dbReference>
<dbReference type="GO" id="GO:0050661">
    <property type="term" value="F:NADP binding"/>
    <property type="evidence" value="ECO:0007669"/>
    <property type="project" value="InterPro"/>
</dbReference>
<dbReference type="GO" id="GO:0055129">
    <property type="term" value="P:L-proline biosynthetic process"/>
    <property type="evidence" value="ECO:0007669"/>
    <property type="project" value="UniProtKB-UniRule"/>
</dbReference>
<dbReference type="CDD" id="cd07079">
    <property type="entry name" value="ALDH_F18-19_ProA-GPR"/>
    <property type="match status" value="1"/>
</dbReference>
<dbReference type="FunFam" id="3.40.309.10:FF:000006">
    <property type="entry name" value="Gamma-glutamyl phosphate reductase"/>
    <property type="match status" value="1"/>
</dbReference>
<dbReference type="Gene3D" id="3.40.605.10">
    <property type="entry name" value="Aldehyde Dehydrogenase, Chain A, domain 1"/>
    <property type="match status" value="1"/>
</dbReference>
<dbReference type="Gene3D" id="3.40.309.10">
    <property type="entry name" value="Aldehyde Dehydrogenase, Chain A, domain 2"/>
    <property type="match status" value="1"/>
</dbReference>
<dbReference type="HAMAP" id="MF_00412">
    <property type="entry name" value="ProA"/>
    <property type="match status" value="1"/>
</dbReference>
<dbReference type="InterPro" id="IPR016161">
    <property type="entry name" value="Ald_DH/histidinol_DH"/>
</dbReference>
<dbReference type="InterPro" id="IPR016163">
    <property type="entry name" value="Ald_DH_C"/>
</dbReference>
<dbReference type="InterPro" id="IPR016162">
    <property type="entry name" value="Ald_DH_N"/>
</dbReference>
<dbReference type="InterPro" id="IPR015590">
    <property type="entry name" value="Aldehyde_DH_dom"/>
</dbReference>
<dbReference type="InterPro" id="IPR020593">
    <property type="entry name" value="G-glutamylP_reductase_CS"/>
</dbReference>
<dbReference type="InterPro" id="IPR012134">
    <property type="entry name" value="Glu-5-SA_DH"/>
</dbReference>
<dbReference type="InterPro" id="IPR000965">
    <property type="entry name" value="GPR_dom"/>
</dbReference>
<dbReference type="NCBIfam" id="NF001221">
    <property type="entry name" value="PRK00197.1"/>
    <property type="match status" value="1"/>
</dbReference>
<dbReference type="NCBIfam" id="TIGR00407">
    <property type="entry name" value="proA"/>
    <property type="match status" value="1"/>
</dbReference>
<dbReference type="PANTHER" id="PTHR11063:SF8">
    <property type="entry name" value="DELTA-1-PYRROLINE-5-CARBOXYLATE SYNTHASE"/>
    <property type="match status" value="1"/>
</dbReference>
<dbReference type="PANTHER" id="PTHR11063">
    <property type="entry name" value="GLUTAMATE SEMIALDEHYDE DEHYDROGENASE"/>
    <property type="match status" value="1"/>
</dbReference>
<dbReference type="Pfam" id="PF00171">
    <property type="entry name" value="Aldedh"/>
    <property type="match status" value="1"/>
</dbReference>
<dbReference type="PIRSF" id="PIRSF000151">
    <property type="entry name" value="GPR"/>
    <property type="match status" value="1"/>
</dbReference>
<dbReference type="SUPFAM" id="SSF53720">
    <property type="entry name" value="ALDH-like"/>
    <property type="match status" value="1"/>
</dbReference>
<dbReference type="PROSITE" id="PS01223">
    <property type="entry name" value="PROA"/>
    <property type="match status" value="1"/>
</dbReference>
<organism>
    <name type="scientific">Desulfovibrio desulfuricans (strain ATCC 27774 / DSM 6949 / MB)</name>
    <dbReference type="NCBI Taxonomy" id="525146"/>
    <lineage>
        <taxon>Bacteria</taxon>
        <taxon>Pseudomonadati</taxon>
        <taxon>Thermodesulfobacteriota</taxon>
        <taxon>Desulfovibrionia</taxon>
        <taxon>Desulfovibrionales</taxon>
        <taxon>Desulfovibrionaceae</taxon>
        <taxon>Desulfovibrio</taxon>
    </lineage>
</organism>
<gene>
    <name evidence="1" type="primary">proA</name>
    <name type="ordered locus">Ddes_0441</name>
</gene>
<evidence type="ECO:0000255" key="1">
    <source>
        <dbReference type="HAMAP-Rule" id="MF_00412"/>
    </source>
</evidence>
<protein>
    <recommendedName>
        <fullName evidence="1">Gamma-glutamyl phosphate reductase</fullName>
        <shortName evidence="1">GPR</shortName>
        <ecNumber evidence="1">1.2.1.41</ecNumber>
    </recommendedName>
    <alternativeName>
        <fullName evidence="1">Glutamate-5-semialdehyde dehydrogenase</fullName>
    </alternativeName>
    <alternativeName>
        <fullName evidence="1">Glutamyl-gamma-semialdehyde dehydrogenase</fullName>
        <shortName evidence="1">GSA dehydrogenase</shortName>
    </alternativeName>
</protein>
<reference key="1">
    <citation type="submission" date="2009-01" db="EMBL/GenBank/DDBJ databases">
        <title>Complete sequence of Desulfovibrio desulfuricans subsp. desulfuricans str. ATCC 27774.</title>
        <authorList>
            <consortium name="US DOE Joint Genome Institute"/>
            <person name="Lucas S."/>
            <person name="Copeland A."/>
            <person name="Lapidus A."/>
            <person name="Glavina del Rio T."/>
            <person name="Tice H."/>
            <person name="Bruce D."/>
            <person name="Goodwin L."/>
            <person name="Pitluck S."/>
            <person name="Sims D."/>
            <person name="Lu M."/>
            <person name="Kiss H."/>
            <person name="Meineke L."/>
            <person name="Brettin T."/>
            <person name="Detter J.C."/>
            <person name="Han C."/>
            <person name="Larimer F."/>
            <person name="Land M."/>
            <person name="Hauser L."/>
            <person name="Kyrpides N."/>
            <person name="Ovchinnikova G."/>
            <person name="Hazen T.C."/>
        </authorList>
    </citation>
    <scope>NUCLEOTIDE SEQUENCE [LARGE SCALE GENOMIC DNA]</scope>
    <source>
        <strain>ATCC 27774 / DSM 6949 / MB</strain>
    </source>
</reference>
<sequence length="423" mass="45076">MTPAEEMARLGAQAKDAARAMTRATPEAKNQALLGLAQLLHQREPEILAANARDIEAARAAGQDAARLDRLTLTSAIMEEMRAACAHVANLPDPVGATESQWQRPNGLLVGKMRIPLGVIAMVYEARPNVTIDAAILCIKAGNAVILRGGSEAIHSNTALAQTLQEAMVQAGLPASAAQLVTVPGHEAVNALCKLDQYIDVIIPRGGERLVRAVTEAATMPVLKHFKGVCHAYIEPDADLERALDIVFNGKVQRPGVCNALECLLVHKDAASAFLPLVAEKLGAAGVEFRADTTALPLMNKAPQGRVVPQRAEDLGQEFHDLVLAVRVVDSMDEALDHIARYGSNHTEIICTNDYAKAMRFLREADASMVAVNASSRFNDGGQLGLGAEIGISTSKLHAYGAMGVEELTTTKFVVLGQGQVRQ</sequence>
<keyword id="KW-0028">Amino-acid biosynthesis</keyword>
<keyword id="KW-0963">Cytoplasm</keyword>
<keyword id="KW-0521">NADP</keyword>
<keyword id="KW-0560">Oxidoreductase</keyword>
<keyword id="KW-0641">Proline biosynthesis</keyword>
<comment type="function">
    <text evidence="1">Catalyzes the NADPH-dependent reduction of L-glutamate 5-phosphate into L-glutamate 5-semialdehyde and phosphate. The product spontaneously undergoes cyclization to form 1-pyrroline-5-carboxylate.</text>
</comment>
<comment type="catalytic activity">
    <reaction evidence="1">
        <text>L-glutamate 5-semialdehyde + phosphate + NADP(+) = L-glutamyl 5-phosphate + NADPH + H(+)</text>
        <dbReference type="Rhea" id="RHEA:19541"/>
        <dbReference type="ChEBI" id="CHEBI:15378"/>
        <dbReference type="ChEBI" id="CHEBI:43474"/>
        <dbReference type="ChEBI" id="CHEBI:57783"/>
        <dbReference type="ChEBI" id="CHEBI:58066"/>
        <dbReference type="ChEBI" id="CHEBI:58274"/>
        <dbReference type="ChEBI" id="CHEBI:58349"/>
        <dbReference type="EC" id="1.2.1.41"/>
    </reaction>
</comment>
<comment type="pathway">
    <text evidence="1">Amino-acid biosynthesis; L-proline biosynthesis; L-glutamate 5-semialdehyde from L-glutamate: step 2/2.</text>
</comment>
<comment type="subcellular location">
    <subcellularLocation>
        <location evidence="1">Cytoplasm</location>
    </subcellularLocation>
</comment>
<comment type="similarity">
    <text evidence="1">Belongs to the gamma-glutamyl phosphate reductase family.</text>
</comment>
<proteinExistence type="inferred from homology"/>